<comment type="function">
    <text evidence="2">May be an anti-apoptotic protein involved in DNA repair or cell survival.</text>
</comment>
<comment type="subcellular location">
    <subcellularLocation>
        <location evidence="2">Cytoplasm</location>
    </subcellularLocation>
    <subcellularLocation>
        <location evidence="2">Nucleus</location>
    </subcellularLocation>
    <text>Accumulates in the nucleus in response to stress.</text>
</comment>
<comment type="tissue specificity">
    <text evidence="2">Highly expressed in the testis, spleen and heart. Expressed at high levels in the primary spermatocytes and to a lesser extent in the round spermatids. Also found in the bone marrow, brain, lung, kidney and liver.</text>
</comment>
<comment type="induction">
    <text evidence="2">Strongly induced by a wide range of stress signals: nitric-oxide, gamma- and UV irradiation, hydrogen peroxide, adriamycin and cytokines and this induction is dependent on p53/TP53. Expression is low in resting cells and increases almost 50-fold as the cells progress through the S phase.</text>
</comment>
<dbReference type="EMBL" id="DQ400346">
    <property type="protein sequence ID" value="ABD63254.1"/>
    <property type="molecule type" value="mRNA"/>
</dbReference>
<dbReference type="EMBL" id="BC066148">
    <property type="protein sequence ID" value="AAH66148.1"/>
    <property type="molecule type" value="mRNA"/>
</dbReference>
<dbReference type="FunCoup" id="Q6NZG4">
    <property type="interactions" value="1673"/>
</dbReference>
<dbReference type="STRING" id="10090.ENSMUSP00000032877"/>
<dbReference type="iPTMnet" id="Q6NZG4"/>
<dbReference type="PhosphoSitePlus" id="Q6NZG4"/>
<dbReference type="PaxDb" id="10090-ENSMUSP00000032877"/>
<dbReference type="ProteomicsDB" id="279177"/>
<dbReference type="AGR" id="MGI:1921291"/>
<dbReference type="MGI" id="MGI:1921291">
    <property type="gene designation" value="Ddias"/>
</dbReference>
<dbReference type="eggNOG" id="ENOG502R2XT">
    <property type="taxonomic scope" value="Eukaryota"/>
</dbReference>
<dbReference type="InParanoid" id="Q6NZG4"/>
<dbReference type="PhylomeDB" id="Q6NZG4"/>
<dbReference type="PRO" id="PR:Q6NZG4"/>
<dbReference type="Proteomes" id="UP000000589">
    <property type="component" value="Unplaced"/>
</dbReference>
<dbReference type="RNAct" id="Q6NZG4">
    <property type="molecule type" value="protein"/>
</dbReference>
<dbReference type="GO" id="GO:0005737">
    <property type="term" value="C:cytoplasm"/>
    <property type="evidence" value="ECO:0000314"/>
    <property type="project" value="MGI"/>
</dbReference>
<dbReference type="GO" id="GO:0005634">
    <property type="term" value="C:nucleus"/>
    <property type="evidence" value="ECO:0000314"/>
    <property type="project" value="MGI"/>
</dbReference>
<dbReference type="GO" id="GO:0071345">
    <property type="term" value="P:cellular response to cytokine stimulus"/>
    <property type="evidence" value="ECO:0000315"/>
    <property type="project" value="MGI"/>
</dbReference>
<dbReference type="GO" id="GO:0071480">
    <property type="term" value="P:cellular response to gamma radiation"/>
    <property type="evidence" value="ECO:0000315"/>
    <property type="project" value="MGI"/>
</dbReference>
<dbReference type="GO" id="GO:0071447">
    <property type="term" value="P:cellular response to hydroperoxide"/>
    <property type="evidence" value="ECO:0000315"/>
    <property type="project" value="MGI"/>
</dbReference>
<dbReference type="GO" id="GO:0034644">
    <property type="term" value="P:cellular response to UV"/>
    <property type="evidence" value="ECO:0000315"/>
    <property type="project" value="MGI"/>
</dbReference>
<dbReference type="GO" id="GO:0006974">
    <property type="term" value="P:DNA damage response"/>
    <property type="evidence" value="ECO:0000315"/>
    <property type="project" value="MGI"/>
</dbReference>
<dbReference type="GO" id="GO:0044346">
    <property type="term" value="P:fibroblast apoptotic process"/>
    <property type="evidence" value="ECO:0000315"/>
    <property type="project" value="MGI"/>
</dbReference>
<dbReference type="GO" id="GO:0030097">
    <property type="term" value="P:hemopoiesis"/>
    <property type="evidence" value="ECO:0000315"/>
    <property type="project" value="MGI"/>
</dbReference>
<dbReference type="GO" id="GO:2000270">
    <property type="term" value="P:negative regulation of fibroblast apoptotic process"/>
    <property type="evidence" value="ECO:0000315"/>
    <property type="project" value="MGI"/>
</dbReference>
<dbReference type="GO" id="GO:1902230">
    <property type="term" value="P:negative regulation of intrinsic apoptotic signaling pathway in response to DNA damage"/>
    <property type="evidence" value="ECO:0007669"/>
    <property type="project" value="InterPro"/>
</dbReference>
<dbReference type="GO" id="GO:0051726">
    <property type="term" value="P:regulation of cell cycle"/>
    <property type="evidence" value="ECO:0000314"/>
    <property type="project" value="MGI"/>
</dbReference>
<dbReference type="GO" id="GO:0007286">
    <property type="term" value="P:spermatid development"/>
    <property type="evidence" value="ECO:0000315"/>
    <property type="project" value="MGI"/>
</dbReference>
<dbReference type="FunFam" id="2.40.50.140:FF:000217">
    <property type="entry name" value="DNA damage induced apoptosis suppressor"/>
    <property type="match status" value="1"/>
</dbReference>
<dbReference type="Gene3D" id="2.40.50.140">
    <property type="entry name" value="Nucleic acid-binding proteins"/>
    <property type="match status" value="1"/>
</dbReference>
<dbReference type="InterPro" id="IPR043522">
    <property type="entry name" value="DDIAS"/>
</dbReference>
<dbReference type="InterPro" id="IPR012340">
    <property type="entry name" value="NA-bd_OB-fold"/>
</dbReference>
<dbReference type="InterPro" id="IPR013955">
    <property type="entry name" value="Rep_factor-A_C"/>
</dbReference>
<dbReference type="PANTHER" id="PTHR35537:SF1">
    <property type="entry name" value="DNA DAMAGE-INDUCED APOPTOSIS SUPPRESSOR PROTEIN"/>
    <property type="match status" value="1"/>
</dbReference>
<dbReference type="PANTHER" id="PTHR35537">
    <property type="entry name" value="DNA DAMAGE-INDUCIBLE APOPTOSIS SUPPRESSOR PROTEIN DDIAS"/>
    <property type="match status" value="1"/>
</dbReference>
<dbReference type="Pfam" id="PF08646">
    <property type="entry name" value="Rep_fac-A_C"/>
    <property type="match status" value="1"/>
</dbReference>
<dbReference type="SUPFAM" id="SSF50249">
    <property type="entry name" value="Nucleic acid-binding proteins"/>
    <property type="match status" value="1"/>
</dbReference>
<keyword id="KW-0053">Apoptosis</keyword>
<keyword id="KW-0131">Cell cycle</keyword>
<keyword id="KW-0963">Cytoplasm</keyword>
<keyword id="KW-0338">Growth arrest</keyword>
<keyword id="KW-0539">Nucleus</keyword>
<keyword id="KW-1185">Reference proteome</keyword>
<reference key="1">
    <citation type="journal article" date="2007" name="Mol. Cell. Biol.">
        <title>noxin, a novel stress-induced gene involved in cell cycle and apoptosis.</title>
        <authorList>
            <person name="Nakaya N."/>
            <person name="Hemish J."/>
            <person name="Krasnov P."/>
            <person name="Kim S.Y."/>
            <person name="Stasiv Y."/>
            <person name="Michurina T."/>
            <person name="Herman D."/>
            <person name="Davidoff M.S."/>
            <person name="Middendorff R."/>
            <person name="Enikolopov G."/>
        </authorList>
    </citation>
    <scope>NUCLEOTIDE SEQUENCE [MRNA]</scope>
    <scope>FUNCTION</scope>
    <scope>INDUCTION</scope>
    <scope>SUBCELLULAR LOCATION</scope>
    <scope>TISSUE SPECIFICITY</scope>
    <source>
        <strain>C57BL/6J</strain>
    </source>
</reference>
<reference key="2">
    <citation type="journal article" date="2004" name="Genome Res.">
        <title>The status, quality, and expansion of the NIH full-length cDNA project: the Mammalian Gene Collection (MGC).</title>
        <authorList>
            <consortium name="The MGC Project Team"/>
        </authorList>
    </citation>
    <scope>NUCLEOTIDE SEQUENCE [LARGE SCALE MRNA]</scope>
    <source>
        <strain>CD-1</strain>
        <tissue>Neural stem cell</tissue>
    </source>
</reference>
<proteinExistence type="evidence at transcript level"/>
<gene>
    <name type="primary">Ddias</name>
    <name type="synonym">Noxin</name>
</gene>
<protein>
    <recommendedName>
        <fullName>DNA damage-induced apoptosis suppressor protein</fullName>
    </recommendedName>
    <alternativeName>
        <fullName>Nitric oxide-inducible gene protein</fullName>
    </alternativeName>
</protein>
<sequence length="898" mass="99945">MNKRRKFLFASVLAVQNSNFIYPSCQRCFSKIILESKRFTCPKCGSSGDTGSTNYRYKLSLKVAESSKLFFITVFGSCLDTFFGLTATGLHRYLGDSIKNLETLDSGRTQSLLTTAVEKCFVGQSFVFGVTNFGDVCGHDSDSSNFQQPCCKHRGEVRTLVASQIILPSPHVKGFTVIAYLHPLLHKKPHCGSQEHSSQSLTSDDSDSDLNNIQGSGNTSWFSESSVGEDFFRYWEPSLELTSSDSQVTSSDDFPASKQIMASGTPNQNRHCISVSEVTSSKNCHDSLQSLWSLHSCMDKNNTTGKLGEELGLPSPVCNSCHESRLSDSHFFPSQMQEPFEEHNLECYSKAEKNDYSQYDIACYQHHEVNTTPILQQRSSAFSLSSLKPEETANPSQNSDSLIWDDLPLSESLNKFLAVVESEVAVTEIDAKNRKQGMDKSIDKCHKNYSRLSLTPWRNTRALNTSCFSLRSSQAMMKDSGKEALFSNCKSNSSPHIQKESKADKTEAAVSIAGSRSDISEDFLPDTCSSALFTSSKDREAFITQKRTSGVLQQRNEISCRPSTSISDCSDLRSRYFTGCGQKLHSGTKGKLAIQNCSKKYSDASDLHKLENKHRWPKKEDDNFTICRKLTYPLETLCSSPESINTSKEMPYRPSNNNLTPSSSGDHEGSYNASADLFDYIAKDKDIGTEITKIPQDNLLPLEVPCTENYPINENRGQPSQKPSLQSISPSRYSRPRSQSDSECDFEESQDFVPCSQSTPVAGFHQRIHGLNGASKILPSIYSNPNANYKNRKNSPLTGQYQATSACSKNVKAFRQKPESPFVSSLTQANVFNHCPAAESLGNDVDEWVPPTTKKVFISDILGFRVMGLRKCLDLHYSPDPKELPRKKLIKVTHKTNI</sequence>
<name>DDIAS_MOUSE</name>
<accession>Q6NZG4</accession>
<accession>A2T1E9</accession>
<feature type="chain" id="PRO_0000311839" description="DNA damage-induced apoptosis suppressor protein">
    <location>
        <begin position="1"/>
        <end position="898"/>
    </location>
</feature>
<feature type="region of interest" description="Disordered" evidence="1">
    <location>
        <begin position="191"/>
        <end position="210"/>
    </location>
</feature>
<feature type="region of interest" description="Disordered" evidence="1">
    <location>
        <begin position="643"/>
        <end position="670"/>
    </location>
</feature>
<feature type="region of interest" description="Disordered" evidence="1">
    <location>
        <begin position="710"/>
        <end position="749"/>
    </location>
</feature>
<feature type="compositionally biased region" description="Polar residues" evidence="1">
    <location>
        <begin position="643"/>
        <end position="664"/>
    </location>
</feature>
<feature type="compositionally biased region" description="Polar residues" evidence="1">
    <location>
        <begin position="710"/>
        <end position="725"/>
    </location>
</feature>
<feature type="compositionally biased region" description="Low complexity" evidence="1">
    <location>
        <begin position="726"/>
        <end position="741"/>
    </location>
</feature>
<feature type="sequence conflict" description="In Ref. 1; ABD63254." evidence="3" ref="1">
    <original>G</original>
    <variation>E</variation>
    <location>
        <position position="95"/>
    </location>
</feature>
<feature type="sequence conflict" description="In Ref. 1; ABD63254." evidence="3" ref="1">
    <original>D</original>
    <variation>G</variation>
    <location>
        <position position="676"/>
    </location>
</feature>
<feature type="sequence conflict" description="In Ref. 1; ABD63254." evidence="3" ref="1">
    <original>P</original>
    <variation>H</variation>
    <location>
        <position position="785"/>
    </location>
</feature>
<organism>
    <name type="scientific">Mus musculus</name>
    <name type="common">Mouse</name>
    <dbReference type="NCBI Taxonomy" id="10090"/>
    <lineage>
        <taxon>Eukaryota</taxon>
        <taxon>Metazoa</taxon>
        <taxon>Chordata</taxon>
        <taxon>Craniata</taxon>
        <taxon>Vertebrata</taxon>
        <taxon>Euteleostomi</taxon>
        <taxon>Mammalia</taxon>
        <taxon>Eutheria</taxon>
        <taxon>Euarchontoglires</taxon>
        <taxon>Glires</taxon>
        <taxon>Rodentia</taxon>
        <taxon>Myomorpha</taxon>
        <taxon>Muroidea</taxon>
        <taxon>Muridae</taxon>
        <taxon>Murinae</taxon>
        <taxon>Mus</taxon>
        <taxon>Mus</taxon>
    </lineage>
</organism>
<evidence type="ECO:0000256" key="1">
    <source>
        <dbReference type="SAM" id="MobiDB-lite"/>
    </source>
</evidence>
<evidence type="ECO:0000269" key="2">
    <source>
    </source>
</evidence>
<evidence type="ECO:0000305" key="3"/>